<feature type="chain" id="PRO_0000225754" description="Large ribosomal subunit protein bL32">
    <location>
        <begin position="1"/>
        <end position="60"/>
    </location>
</feature>
<feature type="region of interest" description="Disordered" evidence="2">
    <location>
        <begin position="1"/>
        <end position="28"/>
    </location>
</feature>
<feature type="compositionally biased region" description="Basic and acidic residues" evidence="2">
    <location>
        <begin position="11"/>
        <end position="22"/>
    </location>
</feature>
<keyword id="KW-0687">Ribonucleoprotein</keyword>
<keyword id="KW-0689">Ribosomal protein</keyword>
<gene>
    <name evidence="1" type="primary">rpmF</name>
    <name type="ordered locus">Psyr_1644</name>
</gene>
<accession>Q4ZVY0</accession>
<organism>
    <name type="scientific">Pseudomonas syringae pv. syringae (strain B728a)</name>
    <dbReference type="NCBI Taxonomy" id="205918"/>
    <lineage>
        <taxon>Bacteria</taxon>
        <taxon>Pseudomonadati</taxon>
        <taxon>Pseudomonadota</taxon>
        <taxon>Gammaproteobacteria</taxon>
        <taxon>Pseudomonadales</taxon>
        <taxon>Pseudomonadaceae</taxon>
        <taxon>Pseudomonas</taxon>
        <taxon>Pseudomonas syringae</taxon>
    </lineage>
</organism>
<reference key="1">
    <citation type="journal article" date="2005" name="Proc. Natl. Acad. Sci. U.S.A.">
        <title>Comparison of the complete genome sequences of Pseudomonas syringae pv. syringae B728a and pv. tomato DC3000.</title>
        <authorList>
            <person name="Feil H."/>
            <person name="Feil W.S."/>
            <person name="Chain P."/>
            <person name="Larimer F."/>
            <person name="Dibartolo G."/>
            <person name="Copeland A."/>
            <person name="Lykidis A."/>
            <person name="Trong S."/>
            <person name="Nolan M."/>
            <person name="Goltsman E."/>
            <person name="Thiel J."/>
            <person name="Malfatti S."/>
            <person name="Loper J.E."/>
            <person name="Lapidus A."/>
            <person name="Detter J.C."/>
            <person name="Land M."/>
            <person name="Richardson P.M."/>
            <person name="Kyrpides N.C."/>
            <person name="Ivanova N."/>
            <person name="Lindow S.E."/>
        </authorList>
    </citation>
    <scope>NUCLEOTIDE SEQUENCE [LARGE SCALE GENOMIC DNA]</scope>
    <source>
        <strain>B728a</strain>
    </source>
</reference>
<comment type="similarity">
    <text evidence="1">Belongs to the bacterial ribosomal protein bL32 family.</text>
</comment>
<evidence type="ECO:0000255" key="1">
    <source>
        <dbReference type="HAMAP-Rule" id="MF_00340"/>
    </source>
</evidence>
<evidence type="ECO:0000256" key="2">
    <source>
        <dbReference type="SAM" id="MobiDB-lite"/>
    </source>
</evidence>
<evidence type="ECO:0000305" key="3"/>
<dbReference type="EMBL" id="CP000075">
    <property type="protein sequence ID" value="AAY36692.1"/>
    <property type="molecule type" value="Genomic_DNA"/>
</dbReference>
<dbReference type="RefSeq" id="WP_002552688.1">
    <property type="nucleotide sequence ID" value="NC_007005.1"/>
</dbReference>
<dbReference type="RefSeq" id="YP_234730.1">
    <property type="nucleotide sequence ID" value="NC_007005.1"/>
</dbReference>
<dbReference type="SMR" id="Q4ZVY0"/>
<dbReference type="STRING" id="205918.Psyr_1644"/>
<dbReference type="GeneID" id="96217995"/>
<dbReference type="KEGG" id="psb:Psyr_1644"/>
<dbReference type="PATRIC" id="fig|205918.7.peg.1681"/>
<dbReference type="eggNOG" id="COG0333">
    <property type="taxonomic scope" value="Bacteria"/>
</dbReference>
<dbReference type="HOGENOM" id="CLU_129084_2_1_6"/>
<dbReference type="OrthoDB" id="9801927at2"/>
<dbReference type="Proteomes" id="UP000000426">
    <property type="component" value="Chromosome"/>
</dbReference>
<dbReference type="GO" id="GO:0015934">
    <property type="term" value="C:large ribosomal subunit"/>
    <property type="evidence" value="ECO:0007669"/>
    <property type="project" value="InterPro"/>
</dbReference>
<dbReference type="GO" id="GO:0003735">
    <property type="term" value="F:structural constituent of ribosome"/>
    <property type="evidence" value="ECO:0007669"/>
    <property type="project" value="InterPro"/>
</dbReference>
<dbReference type="GO" id="GO:0006412">
    <property type="term" value="P:translation"/>
    <property type="evidence" value="ECO:0007669"/>
    <property type="project" value="UniProtKB-UniRule"/>
</dbReference>
<dbReference type="HAMAP" id="MF_00340">
    <property type="entry name" value="Ribosomal_bL32"/>
    <property type="match status" value="1"/>
</dbReference>
<dbReference type="InterPro" id="IPR002677">
    <property type="entry name" value="Ribosomal_bL32"/>
</dbReference>
<dbReference type="InterPro" id="IPR044957">
    <property type="entry name" value="Ribosomal_bL32_bact"/>
</dbReference>
<dbReference type="InterPro" id="IPR011332">
    <property type="entry name" value="Ribosomal_zn-bd"/>
</dbReference>
<dbReference type="NCBIfam" id="TIGR01031">
    <property type="entry name" value="rpmF_bact"/>
    <property type="match status" value="1"/>
</dbReference>
<dbReference type="PANTHER" id="PTHR35534">
    <property type="entry name" value="50S RIBOSOMAL PROTEIN L32"/>
    <property type="match status" value="1"/>
</dbReference>
<dbReference type="PANTHER" id="PTHR35534:SF1">
    <property type="entry name" value="LARGE RIBOSOMAL SUBUNIT PROTEIN BL32"/>
    <property type="match status" value="1"/>
</dbReference>
<dbReference type="Pfam" id="PF01783">
    <property type="entry name" value="Ribosomal_L32p"/>
    <property type="match status" value="1"/>
</dbReference>
<dbReference type="SUPFAM" id="SSF57829">
    <property type="entry name" value="Zn-binding ribosomal proteins"/>
    <property type="match status" value="1"/>
</dbReference>
<proteinExistence type="inferred from homology"/>
<name>RL32_PSEU2</name>
<sequence length="60" mass="6771">MAVQQNKKSRSARDMRRSHDALEASTLSVEKTTGEIHLRHHVSPEGVYRGRKVIDKGADE</sequence>
<protein>
    <recommendedName>
        <fullName evidence="1">Large ribosomal subunit protein bL32</fullName>
    </recommendedName>
    <alternativeName>
        <fullName evidence="3">50S ribosomal protein L32</fullName>
    </alternativeName>
</protein>